<keyword id="KW-0963">Cytoplasm</keyword>
<keyword id="KW-0251">Elongation factor</keyword>
<keyword id="KW-0342">GTP-binding</keyword>
<keyword id="KW-0378">Hydrolase</keyword>
<keyword id="KW-0460">Magnesium</keyword>
<keyword id="KW-0479">Metal-binding</keyword>
<keyword id="KW-0547">Nucleotide-binding</keyword>
<keyword id="KW-0648">Protein biosynthesis</keyword>
<evidence type="ECO:0000250" key="1"/>
<evidence type="ECO:0000255" key="2">
    <source>
        <dbReference type="HAMAP-Rule" id="MF_00118"/>
    </source>
</evidence>
<protein>
    <recommendedName>
        <fullName evidence="2">Elongation factor Tu 1</fullName>
        <shortName evidence="2">EF-Tu 1</shortName>
        <ecNumber evidence="2">3.6.5.3</ecNumber>
    </recommendedName>
</protein>
<name>EFTU1_VIBVY</name>
<accession>Q7MH43</accession>
<sequence length="394" mass="43142">MSKEKFERTKPHVNVGTIGHVDHGKTTLTAAICTVLSKVYGGTARDFASIDNAPEERERGITISTSHVEYDTPSRHYAHVDCPGHADYVKNMITGAAQMDGGILVVAATDGPMPQTREHILLGRQVGIPYIIVFMNKCDMVDDEELLELVEMEVRELLSEYDFPGDDLPVIQGSALGALNGEEQWEAKIVELAEALDSYIPEPERAVDMPFLMPIEDVFSIQGRGTVVTGRIERGILKVGDEVAIVGIKDTTTTTCTGVEMFRKLLDEGRAGENVGALLRGTKRDEVERGQVLAKPGSITPHTKFESEVYVLSKDEGGRHTPFFKGYRPQFYFRTTDVTGDISLPEGVEMVMPGDNIQMVVELISPIAMDEGLRFAIREGGRTVGAGVVAKIFA</sequence>
<proteinExistence type="inferred from homology"/>
<comment type="function">
    <text evidence="2">GTP hydrolase that promotes the GTP-dependent binding of aminoacyl-tRNA to the A-site of ribosomes during protein biosynthesis.</text>
</comment>
<comment type="catalytic activity">
    <reaction evidence="2">
        <text>GTP + H2O = GDP + phosphate + H(+)</text>
        <dbReference type="Rhea" id="RHEA:19669"/>
        <dbReference type="ChEBI" id="CHEBI:15377"/>
        <dbReference type="ChEBI" id="CHEBI:15378"/>
        <dbReference type="ChEBI" id="CHEBI:37565"/>
        <dbReference type="ChEBI" id="CHEBI:43474"/>
        <dbReference type="ChEBI" id="CHEBI:58189"/>
        <dbReference type="EC" id="3.6.5.3"/>
    </reaction>
    <physiologicalReaction direction="left-to-right" evidence="2">
        <dbReference type="Rhea" id="RHEA:19670"/>
    </physiologicalReaction>
</comment>
<comment type="subunit">
    <text evidence="2">Monomer.</text>
</comment>
<comment type="subcellular location">
    <subcellularLocation>
        <location evidence="2">Cytoplasm</location>
    </subcellularLocation>
</comment>
<comment type="similarity">
    <text evidence="2">Belongs to the TRAFAC class translation factor GTPase superfamily. Classic translation factor GTPase family. EF-Tu/EF-1A subfamily.</text>
</comment>
<organism>
    <name type="scientific">Vibrio vulnificus (strain YJ016)</name>
    <dbReference type="NCBI Taxonomy" id="196600"/>
    <lineage>
        <taxon>Bacteria</taxon>
        <taxon>Pseudomonadati</taxon>
        <taxon>Pseudomonadota</taxon>
        <taxon>Gammaproteobacteria</taxon>
        <taxon>Vibrionales</taxon>
        <taxon>Vibrionaceae</taxon>
        <taxon>Vibrio</taxon>
    </lineage>
</organism>
<gene>
    <name evidence="2" type="primary">tuf1</name>
    <name type="ordered locus">VV3029</name>
</gene>
<feature type="chain" id="PRO_0000091435" description="Elongation factor Tu 1">
    <location>
        <begin position="1"/>
        <end position="394"/>
    </location>
</feature>
<feature type="domain" description="tr-type G">
    <location>
        <begin position="10"/>
        <end position="204"/>
    </location>
</feature>
<feature type="region of interest" description="G1" evidence="1">
    <location>
        <begin position="19"/>
        <end position="26"/>
    </location>
</feature>
<feature type="region of interest" description="G2" evidence="1">
    <location>
        <begin position="60"/>
        <end position="64"/>
    </location>
</feature>
<feature type="region of interest" description="G3" evidence="1">
    <location>
        <begin position="81"/>
        <end position="84"/>
    </location>
</feature>
<feature type="region of interest" description="G4" evidence="1">
    <location>
        <begin position="136"/>
        <end position="139"/>
    </location>
</feature>
<feature type="region of interest" description="G5" evidence="1">
    <location>
        <begin position="174"/>
        <end position="176"/>
    </location>
</feature>
<feature type="binding site" evidence="2">
    <location>
        <begin position="19"/>
        <end position="26"/>
    </location>
    <ligand>
        <name>GTP</name>
        <dbReference type="ChEBI" id="CHEBI:37565"/>
    </ligand>
</feature>
<feature type="binding site" evidence="2">
    <location>
        <position position="26"/>
    </location>
    <ligand>
        <name>Mg(2+)</name>
        <dbReference type="ChEBI" id="CHEBI:18420"/>
    </ligand>
</feature>
<feature type="binding site" evidence="2">
    <location>
        <begin position="81"/>
        <end position="85"/>
    </location>
    <ligand>
        <name>GTP</name>
        <dbReference type="ChEBI" id="CHEBI:37565"/>
    </ligand>
</feature>
<feature type="binding site" evidence="2">
    <location>
        <begin position="136"/>
        <end position="139"/>
    </location>
    <ligand>
        <name>GTP</name>
        <dbReference type="ChEBI" id="CHEBI:37565"/>
    </ligand>
</feature>
<dbReference type="EC" id="3.6.5.3" evidence="2"/>
<dbReference type="EMBL" id="BA000037">
    <property type="protein sequence ID" value="BAC95793.1"/>
    <property type="molecule type" value="Genomic_DNA"/>
</dbReference>
<dbReference type="RefSeq" id="WP_011151305.1">
    <property type="nucleotide sequence ID" value="NC_005139.1"/>
</dbReference>
<dbReference type="SMR" id="Q7MH43"/>
<dbReference type="STRING" id="672.VV93_v1c27570"/>
<dbReference type="KEGG" id="vvy:VV3029"/>
<dbReference type="PATRIC" id="fig|196600.6.peg.3006"/>
<dbReference type="HOGENOM" id="CLU_007265_0_0_6"/>
<dbReference type="Proteomes" id="UP000002675">
    <property type="component" value="Chromosome I"/>
</dbReference>
<dbReference type="GO" id="GO:0005829">
    <property type="term" value="C:cytosol"/>
    <property type="evidence" value="ECO:0007669"/>
    <property type="project" value="TreeGrafter"/>
</dbReference>
<dbReference type="GO" id="GO:0005525">
    <property type="term" value="F:GTP binding"/>
    <property type="evidence" value="ECO:0007669"/>
    <property type="project" value="UniProtKB-UniRule"/>
</dbReference>
<dbReference type="GO" id="GO:0003924">
    <property type="term" value="F:GTPase activity"/>
    <property type="evidence" value="ECO:0007669"/>
    <property type="project" value="InterPro"/>
</dbReference>
<dbReference type="GO" id="GO:0097216">
    <property type="term" value="F:guanosine tetraphosphate binding"/>
    <property type="evidence" value="ECO:0007669"/>
    <property type="project" value="UniProtKB-ARBA"/>
</dbReference>
<dbReference type="GO" id="GO:0003746">
    <property type="term" value="F:translation elongation factor activity"/>
    <property type="evidence" value="ECO:0007669"/>
    <property type="project" value="UniProtKB-UniRule"/>
</dbReference>
<dbReference type="CDD" id="cd01884">
    <property type="entry name" value="EF_Tu"/>
    <property type="match status" value="1"/>
</dbReference>
<dbReference type="CDD" id="cd03697">
    <property type="entry name" value="EFTU_II"/>
    <property type="match status" value="1"/>
</dbReference>
<dbReference type="CDD" id="cd03707">
    <property type="entry name" value="EFTU_III"/>
    <property type="match status" value="1"/>
</dbReference>
<dbReference type="FunFam" id="2.40.30.10:FF:000001">
    <property type="entry name" value="Elongation factor Tu"/>
    <property type="match status" value="1"/>
</dbReference>
<dbReference type="FunFam" id="3.40.50.300:FF:000003">
    <property type="entry name" value="Elongation factor Tu"/>
    <property type="match status" value="1"/>
</dbReference>
<dbReference type="Gene3D" id="3.40.50.300">
    <property type="entry name" value="P-loop containing nucleotide triphosphate hydrolases"/>
    <property type="match status" value="1"/>
</dbReference>
<dbReference type="Gene3D" id="2.40.30.10">
    <property type="entry name" value="Translation factors"/>
    <property type="match status" value="2"/>
</dbReference>
<dbReference type="HAMAP" id="MF_00118_B">
    <property type="entry name" value="EF_Tu_B"/>
    <property type="match status" value="1"/>
</dbReference>
<dbReference type="InterPro" id="IPR041709">
    <property type="entry name" value="EF-Tu_GTP-bd"/>
</dbReference>
<dbReference type="InterPro" id="IPR050055">
    <property type="entry name" value="EF-Tu_GTPase"/>
</dbReference>
<dbReference type="InterPro" id="IPR004161">
    <property type="entry name" value="EFTu-like_2"/>
</dbReference>
<dbReference type="InterPro" id="IPR033720">
    <property type="entry name" value="EFTU_2"/>
</dbReference>
<dbReference type="InterPro" id="IPR031157">
    <property type="entry name" value="G_TR_CS"/>
</dbReference>
<dbReference type="InterPro" id="IPR027417">
    <property type="entry name" value="P-loop_NTPase"/>
</dbReference>
<dbReference type="InterPro" id="IPR005225">
    <property type="entry name" value="Small_GTP-bd"/>
</dbReference>
<dbReference type="InterPro" id="IPR000795">
    <property type="entry name" value="T_Tr_GTP-bd_dom"/>
</dbReference>
<dbReference type="InterPro" id="IPR009000">
    <property type="entry name" value="Transl_B-barrel_sf"/>
</dbReference>
<dbReference type="InterPro" id="IPR009001">
    <property type="entry name" value="Transl_elong_EF1A/Init_IF2_C"/>
</dbReference>
<dbReference type="InterPro" id="IPR004541">
    <property type="entry name" value="Transl_elong_EFTu/EF1A_bac/org"/>
</dbReference>
<dbReference type="InterPro" id="IPR004160">
    <property type="entry name" value="Transl_elong_EFTu/EF1A_C"/>
</dbReference>
<dbReference type="NCBIfam" id="TIGR00485">
    <property type="entry name" value="EF-Tu"/>
    <property type="match status" value="1"/>
</dbReference>
<dbReference type="NCBIfam" id="NF000766">
    <property type="entry name" value="PRK00049.1"/>
    <property type="match status" value="1"/>
</dbReference>
<dbReference type="NCBIfam" id="NF009372">
    <property type="entry name" value="PRK12735.1"/>
    <property type="match status" value="1"/>
</dbReference>
<dbReference type="NCBIfam" id="NF009373">
    <property type="entry name" value="PRK12736.1"/>
    <property type="match status" value="1"/>
</dbReference>
<dbReference type="NCBIfam" id="TIGR00231">
    <property type="entry name" value="small_GTP"/>
    <property type="match status" value="1"/>
</dbReference>
<dbReference type="PANTHER" id="PTHR43721:SF22">
    <property type="entry name" value="ELONGATION FACTOR TU, MITOCHONDRIAL"/>
    <property type="match status" value="1"/>
</dbReference>
<dbReference type="PANTHER" id="PTHR43721">
    <property type="entry name" value="ELONGATION FACTOR TU-RELATED"/>
    <property type="match status" value="1"/>
</dbReference>
<dbReference type="Pfam" id="PF00009">
    <property type="entry name" value="GTP_EFTU"/>
    <property type="match status" value="1"/>
</dbReference>
<dbReference type="Pfam" id="PF03144">
    <property type="entry name" value="GTP_EFTU_D2"/>
    <property type="match status" value="1"/>
</dbReference>
<dbReference type="Pfam" id="PF03143">
    <property type="entry name" value="GTP_EFTU_D3"/>
    <property type="match status" value="1"/>
</dbReference>
<dbReference type="PRINTS" id="PR00315">
    <property type="entry name" value="ELONGATNFCT"/>
</dbReference>
<dbReference type="SUPFAM" id="SSF50465">
    <property type="entry name" value="EF-Tu/eEF-1alpha/eIF2-gamma C-terminal domain"/>
    <property type="match status" value="1"/>
</dbReference>
<dbReference type="SUPFAM" id="SSF52540">
    <property type="entry name" value="P-loop containing nucleoside triphosphate hydrolases"/>
    <property type="match status" value="1"/>
</dbReference>
<dbReference type="SUPFAM" id="SSF50447">
    <property type="entry name" value="Translation proteins"/>
    <property type="match status" value="1"/>
</dbReference>
<dbReference type="PROSITE" id="PS00301">
    <property type="entry name" value="G_TR_1"/>
    <property type="match status" value="1"/>
</dbReference>
<dbReference type="PROSITE" id="PS51722">
    <property type="entry name" value="G_TR_2"/>
    <property type="match status" value="1"/>
</dbReference>
<reference key="1">
    <citation type="journal article" date="2003" name="Genome Res.">
        <title>Comparative genome analysis of Vibrio vulnificus, a marine pathogen.</title>
        <authorList>
            <person name="Chen C.-Y."/>
            <person name="Wu K.-M."/>
            <person name="Chang Y.-C."/>
            <person name="Chang C.-H."/>
            <person name="Tsai H.-C."/>
            <person name="Liao T.-L."/>
            <person name="Liu Y.-M."/>
            <person name="Chen H.-J."/>
            <person name="Shen A.B.-T."/>
            <person name="Li J.-C."/>
            <person name="Su T.-L."/>
            <person name="Shao C.-P."/>
            <person name="Lee C.-T."/>
            <person name="Hor L.-I."/>
            <person name="Tsai S.-F."/>
        </authorList>
    </citation>
    <scope>NUCLEOTIDE SEQUENCE [LARGE SCALE GENOMIC DNA]</scope>
    <source>
        <strain>YJ016</strain>
    </source>
</reference>